<dbReference type="EMBL" id="CP001339">
    <property type="protein sequence ID" value="ACL71161.1"/>
    <property type="molecule type" value="Genomic_DNA"/>
</dbReference>
<dbReference type="RefSeq" id="WP_012636650.1">
    <property type="nucleotide sequence ID" value="NC_011901.1"/>
</dbReference>
<dbReference type="SMR" id="B8GTA1"/>
<dbReference type="STRING" id="396588.Tgr7_0057"/>
<dbReference type="KEGG" id="tgr:Tgr7_0057"/>
<dbReference type="eggNOG" id="COG1220">
    <property type="taxonomic scope" value="Bacteria"/>
</dbReference>
<dbReference type="HOGENOM" id="CLU_033123_0_0_6"/>
<dbReference type="OrthoDB" id="9804062at2"/>
<dbReference type="Proteomes" id="UP000002383">
    <property type="component" value="Chromosome"/>
</dbReference>
<dbReference type="GO" id="GO:0009376">
    <property type="term" value="C:HslUV protease complex"/>
    <property type="evidence" value="ECO:0007669"/>
    <property type="project" value="UniProtKB-UniRule"/>
</dbReference>
<dbReference type="GO" id="GO:0005524">
    <property type="term" value="F:ATP binding"/>
    <property type="evidence" value="ECO:0007669"/>
    <property type="project" value="UniProtKB-UniRule"/>
</dbReference>
<dbReference type="GO" id="GO:0016887">
    <property type="term" value="F:ATP hydrolysis activity"/>
    <property type="evidence" value="ECO:0007669"/>
    <property type="project" value="InterPro"/>
</dbReference>
<dbReference type="GO" id="GO:0008233">
    <property type="term" value="F:peptidase activity"/>
    <property type="evidence" value="ECO:0007669"/>
    <property type="project" value="InterPro"/>
</dbReference>
<dbReference type="GO" id="GO:0036402">
    <property type="term" value="F:proteasome-activating activity"/>
    <property type="evidence" value="ECO:0007669"/>
    <property type="project" value="UniProtKB-UniRule"/>
</dbReference>
<dbReference type="GO" id="GO:0043335">
    <property type="term" value="P:protein unfolding"/>
    <property type="evidence" value="ECO:0007669"/>
    <property type="project" value="UniProtKB-UniRule"/>
</dbReference>
<dbReference type="GO" id="GO:0051603">
    <property type="term" value="P:proteolysis involved in protein catabolic process"/>
    <property type="evidence" value="ECO:0007669"/>
    <property type="project" value="TreeGrafter"/>
</dbReference>
<dbReference type="CDD" id="cd19498">
    <property type="entry name" value="RecA-like_HslU"/>
    <property type="match status" value="1"/>
</dbReference>
<dbReference type="FunFam" id="1.10.8.10:FF:000028">
    <property type="entry name" value="ATP-dependent protease ATPase subunit HslU"/>
    <property type="match status" value="1"/>
</dbReference>
<dbReference type="FunFam" id="3.40.50.300:FF:000213">
    <property type="entry name" value="ATP-dependent protease ATPase subunit HslU"/>
    <property type="match status" value="1"/>
</dbReference>
<dbReference type="FunFam" id="3.40.50.300:FF:000220">
    <property type="entry name" value="ATP-dependent protease ATPase subunit HslU"/>
    <property type="match status" value="1"/>
</dbReference>
<dbReference type="Gene3D" id="1.10.8.60">
    <property type="match status" value="1"/>
</dbReference>
<dbReference type="Gene3D" id="3.40.50.300">
    <property type="entry name" value="P-loop containing nucleotide triphosphate hydrolases"/>
    <property type="match status" value="2"/>
</dbReference>
<dbReference type="HAMAP" id="MF_00249">
    <property type="entry name" value="HslU"/>
    <property type="match status" value="1"/>
</dbReference>
<dbReference type="InterPro" id="IPR003593">
    <property type="entry name" value="AAA+_ATPase"/>
</dbReference>
<dbReference type="InterPro" id="IPR050052">
    <property type="entry name" value="ATP-dep_Clp_protease_ClpX"/>
</dbReference>
<dbReference type="InterPro" id="IPR003959">
    <property type="entry name" value="ATPase_AAA_core"/>
</dbReference>
<dbReference type="InterPro" id="IPR019489">
    <property type="entry name" value="Clp_ATPase_C"/>
</dbReference>
<dbReference type="InterPro" id="IPR004491">
    <property type="entry name" value="HslU"/>
</dbReference>
<dbReference type="InterPro" id="IPR027417">
    <property type="entry name" value="P-loop_NTPase"/>
</dbReference>
<dbReference type="NCBIfam" id="TIGR00390">
    <property type="entry name" value="hslU"/>
    <property type="match status" value="1"/>
</dbReference>
<dbReference type="NCBIfam" id="NF003544">
    <property type="entry name" value="PRK05201.1"/>
    <property type="match status" value="1"/>
</dbReference>
<dbReference type="PANTHER" id="PTHR48102">
    <property type="entry name" value="ATP-DEPENDENT CLP PROTEASE ATP-BINDING SUBUNIT CLPX-LIKE, MITOCHONDRIAL-RELATED"/>
    <property type="match status" value="1"/>
</dbReference>
<dbReference type="PANTHER" id="PTHR48102:SF3">
    <property type="entry name" value="ATP-DEPENDENT PROTEASE ATPASE SUBUNIT HSLU"/>
    <property type="match status" value="1"/>
</dbReference>
<dbReference type="Pfam" id="PF00004">
    <property type="entry name" value="AAA"/>
    <property type="match status" value="1"/>
</dbReference>
<dbReference type="Pfam" id="PF07724">
    <property type="entry name" value="AAA_2"/>
    <property type="match status" value="1"/>
</dbReference>
<dbReference type="SMART" id="SM00382">
    <property type="entry name" value="AAA"/>
    <property type="match status" value="1"/>
</dbReference>
<dbReference type="SMART" id="SM01086">
    <property type="entry name" value="ClpB_D2-small"/>
    <property type="match status" value="1"/>
</dbReference>
<dbReference type="SUPFAM" id="SSF52540">
    <property type="entry name" value="P-loop containing nucleoside triphosphate hydrolases"/>
    <property type="match status" value="1"/>
</dbReference>
<protein>
    <recommendedName>
        <fullName evidence="1">ATP-dependent protease ATPase subunit HslU</fullName>
    </recommendedName>
    <alternativeName>
        <fullName evidence="1">Unfoldase HslU</fullName>
    </alternativeName>
</protein>
<accession>B8GTA1</accession>
<sequence>MSDMTPREIVQELDKHIVGQKDAKRAVAIALRNRWRRQQLPEALRQEVTPKNILMIGPTGVGKTEIARRLARLANAPFIKVEATKFTEVGYVGRDVESIIRDLVDAAIKLLREQEMGKVRFRAEEAAEERVLDVLLPAPRQAGFMSEPASAPEQSETRQKFRKRLREGQLDDKEIEIQVSATPVGVEIMTPPGMEEMASQLQSLFQNIGGGRSQTRKLKIRDAMKLLTDEEAARMVNQDELKLRAVANVEQNGIVFLDEIDKVAKRGEYGGADVSREGVQRDLLPLVEGCTVNTKFGMVRTDHILFIASGAFHLSKPSDLIPELQGRLPIRVELSALTAEDFVRILTEPDASLTEQYSALLQTEGVEVNFAEDGVRRIAEIATRVNERTENIGARRLHTVMERLLEQISFEAPDHQGPVSIDAAYVDERLEELVQDEDLSRYIL</sequence>
<gene>
    <name evidence="1" type="primary">hslU</name>
    <name type="ordered locus">Tgr7_0057</name>
</gene>
<organism>
    <name type="scientific">Thioalkalivibrio sulfidiphilus (strain HL-EbGR7)</name>
    <dbReference type="NCBI Taxonomy" id="396588"/>
    <lineage>
        <taxon>Bacteria</taxon>
        <taxon>Pseudomonadati</taxon>
        <taxon>Pseudomonadota</taxon>
        <taxon>Gammaproteobacteria</taxon>
        <taxon>Chromatiales</taxon>
        <taxon>Ectothiorhodospiraceae</taxon>
        <taxon>Thioalkalivibrio</taxon>
    </lineage>
</organism>
<evidence type="ECO:0000255" key="1">
    <source>
        <dbReference type="HAMAP-Rule" id="MF_00249"/>
    </source>
</evidence>
<reference key="1">
    <citation type="journal article" date="2011" name="Stand. Genomic Sci.">
        <title>Complete genome sequence of 'Thioalkalivibrio sulfidophilus' HL-EbGr7.</title>
        <authorList>
            <person name="Muyzer G."/>
            <person name="Sorokin D.Y."/>
            <person name="Mavromatis K."/>
            <person name="Lapidus A."/>
            <person name="Clum A."/>
            <person name="Ivanova N."/>
            <person name="Pati A."/>
            <person name="d'Haeseleer P."/>
            <person name="Woyke T."/>
            <person name="Kyrpides N.C."/>
        </authorList>
    </citation>
    <scope>NUCLEOTIDE SEQUENCE [LARGE SCALE GENOMIC DNA]</scope>
    <source>
        <strain>HL-EbGR7</strain>
    </source>
</reference>
<feature type="chain" id="PRO_1000125454" description="ATP-dependent protease ATPase subunit HslU">
    <location>
        <begin position="1"/>
        <end position="444"/>
    </location>
</feature>
<feature type="binding site" evidence="1">
    <location>
        <position position="18"/>
    </location>
    <ligand>
        <name>ATP</name>
        <dbReference type="ChEBI" id="CHEBI:30616"/>
    </ligand>
</feature>
<feature type="binding site" evidence="1">
    <location>
        <begin position="60"/>
        <end position="65"/>
    </location>
    <ligand>
        <name>ATP</name>
        <dbReference type="ChEBI" id="CHEBI:30616"/>
    </ligand>
</feature>
<feature type="binding site" evidence="1">
    <location>
        <position position="258"/>
    </location>
    <ligand>
        <name>ATP</name>
        <dbReference type="ChEBI" id="CHEBI:30616"/>
    </ligand>
</feature>
<feature type="binding site" evidence="1">
    <location>
        <position position="323"/>
    </location>
    <ligand>
        <name>ATP</name>
        <dbReference type="ChEBI" id="CHEBI:30616"/>
    </ligand>
</feature>
<feature type="binding site" evidence="1">
    <location>
        <position position="395"/>
    </location>
    <ligand>
        <name>ATP</name>
        <dbReference type="ChEBI" id="CHEBI:30616"/>
    </ligand>
</feature>
<keyword id="KW-0067">ATP-binding</keyword>
<keyword id="KW-0143">Chaperone</keyword>
<keyword id="KW-0963">Cytoplasm</keyword>
<keyword id="KW-0547">Nucleotide-binding</keyword>
<keyword id="KW-1185">Reference proteome</keyword>
<keyword id="KW-0346">Stress response</keyword>
<comment type="function">
    <text evidence="1">ATPase subunit of a proteasome-like degradation complex; this subunit has chaperone activity. The binding of ATP and its subsequent hydrolysis by HslU are essential for unfolding of protein substrates subsequently hydrolyzed by HslV. HslU recognizes the N-terminal part of its protein substrates and unfolds these before they are guided to HslV for hydrolysis.</text>
</comment>
<comment type="subunit">
    <text evidence="1">A double ring-shaped homohexamer of HslV is capped on each side by a ring-shaped HslU homohexamer. The assembly of the HslU/HslV complex is dependent on binding of ATP.</text>
</comment>
<comment type="subcellular location">
    <subcellularLocation>
        <location evidence="1">Cytoplasm</location>
    </subcellularLocation>
</comment>
<comment type="similarity">
    <text evidence="1">Belongs to the ClpX chaperone family. HslU subfamily.</text>
</comment>
<proteinExistence type="inferred from homology"/>
<name>HSLU_THISH</name>